<gene>
    <name evidence="1" type="primary">hslU</name>
    <name type="ordered locus">RF_0516</name>
</gene>
<keyword id="KW-0067">ATP-binding</keyword>
<keyword id="KW-0143">Chaperone</keyword>
<keyword id="KW-0963">Cytoplasm</keyword>
<keyword id="KW-0547">Nucleotide-binding</keyword>
<evidence type="ECO:0000255" key="1">
    <source>
        <dbReference type="HAMAP-Rule" id="MF_00249"/>
    </source>
</evidence>
<accession>Q4UM53</accession>
<name>HSLU_RICFE</name>
<sequence>MKATKTTYKKDPMGLTPSQIVNELNRFIVGQEKAKKAVAIALRNRCRRKRVEGNLRNEIVPKNILMIGSTGVGKTEIARRLAKLTNSPFYKIEATKFTEVGYVGRDVESIIRDLVEIAVNTKKTLAKMEVDINAREKAIERILDSLVGKTSSSETREKFKEKILNGKLDDTEIEISVADTTPVGGGSFEIPGMPGASMGVLNLGDMIGRALGSSKTKTKKMLVKDAMAIIIPEESEKLIDQEKIIQQAINLAENDGIVFIDEIDKIASTGSSGAKNAEISREGVQRDLLPLIEGTTVNTKYGPVKTDHILFIASGAFHIAKPSDLLPELQGRLPIRVELNSLTKDDMIKILLEPETSLVKQYSALIGTEDVHLEFAASAIEKIADYAITVNLEVEDIGARRLHTILENLLEDISFEASEMKGKKITIDDKFVENQLSKIITNLDLAKFVL</sequence>
<proteinExistence type="inferred from homology"/>
<dbReference type="EMBL" id="CP000053">
    <property type="protein sequence ID" value="AAY61367.1"/>
    <property type="molecule type" value="Genomic_DNA"/>
</dbReference>
<dbReference type="SMR" id="Q4UM53"/>
<dbReference type="STRING" id="315456.RF_0516"/>
<dbReference type="KEGG" id="rfe:RF_0516"/>
<dbReference type="eggNOG" id="COG1220">
    <property type="taxonomic scope" value="Bacteria"/>
</dbReference>
<dbReference type="HOGENOM" id="CLU_033123_0_0_5"/>
<dbReference type="OrthoDB" id="9804062at2"/>
<dbReference type="Proteomes" id="UP000008548">
    <property type="component" value="Chromosome"/>
</dbReference>
<dbReference type="GO" id="GO:0009376">
    <property type="term" value="C:HslUV protease complex"/>
    <property type="evidence" value="ECO:0007669"/>
    <property type="project" value="UniProtKB-UniRule"/>
</dbReference>
<dbReference type="GO" id="GO:0005524">
    <property type="term" value="F:ATP binding"/>
    <property type="evidence" value="ECO:0007669"/>
    <property type="project" value="UniProtKB-UniRule"/>
</dbReference>
<dbReference type="GO" id="GO:0016887">
    <property type="term" value="F:ATP hydrolysis activity"/>
    <property type="evidence" value="ECO:0007669"/>
    <property type="project" value="InterPro"/>
</dbReference>
<dbReference type="GO" id="GO:0008233">
    <property type="term" value="F:peptidase activity"/>
    <property type="evidence" value="ECO:0007669"/>
    <property type="project" value="InterPro"/>
</dbReference>
<dbReference type="GO" id="GO:0036402">
    <property type="term" value="F:proteasome-activating activity"/>
    <property type="evidence" value="ECO:0007669"/>
    <property type="project" value="UniProtKB-UniRule"/>
</dbReference>
<dbReference type="GO" id="GO:0043335">
    <property type="term" value="P:protein unfolding"/>
    <property type="evidence" value="ECO:0007669"/>
    <property type="project" value="UniProtKB-UniRule"/>
</dbReference>
<dbReference type="GO" id="GO:0051603">
    <property type="term" value="P:proteolysis involved in protein catabolic process"/>
    <property type="evidence" value="ECO:0007669"/>
    <property type="project" value="TreeGrafter"/>
</dbReference>
<dbReference type="CDD" id="cd19498">
    <property type="entry name" value="RecA-like_HslU"/>
    <property type="match status" value="1"/>
</dbReference>
<dbReference type="FunFam" id="3.40.50.300:FF:000213">
    <property type="entry name" value="ATP-dependent protease ATPase subunit HslU"/>
    <property type="match status" value="1"/>
</dbReference>
<dbReference type="Gene3D" id="1.10.8.60">
    <property type="match status" value="1"/>
</dbReference>
<dbReference type="Gene3D" id="3.40.50.300">
    <property type="entry name" value="P-loop containing nucleotide triphosphate hydrolases"/>
    <property type="match status" value="2"/>
</dbReference>
<dbReference type="HAMAP" id="MF_00249">
    <property type="entry name" value="HslU"/>
    <property type="match status" value="1"/>
</dbReference>
<dbReference type="InterPro" id="IPR003593">
    <property type="entry name" value="AAA+_ATPase"/>
</dbReference>
<dbReference type="InterPro" id="IPR050052">
    <property type="entry name" value="ATP-dep_Clp_protease_ClpX"/>
</dbReference>
<dbReference type="InterPro" id="IPR003959">
    <property type="entry name" value="ATPase_AAA_core"/>
</dbReference>
<dbReference type="InterPro" id="IPR019489">
    <property type="entry name" value="Clp_ATPase_C"/>
</dbReference>
<dbReference type="InterPro" id="IPR004491">
    <property type="entry name" value="HslU"/>
</dbReference>
<dbReference type="InterPro" id="IPR027417">
    <property type="entry name" value="P-loop_NTPase"/>
</dbReference>
<dbReference type="NCBIfam" id="TIGR00390">
    <property type="entry name" value="hslU"/>
    <property type="match status" value="1"/>
</dbReference>
<dbReference type="NCBIfam" id="NF003544">
    <property type="entry name" value="PRK05201.1"/>
    <property type="match status" value="1"/>
</dbReference>
<dbReference type="PANTHER" id="PTHR48102">
    <property type="entry name" value="ATP-DEPENDENT CLP PROTEASE ATP-BINDING SUBUNIT CLPX-LIKE, MITOCHONDRIAL-RELATED"/>
    <property type="match status" value="1"/>
</dbReference>
<dbReference type="PANTHER" id="PTHR48102:SF3">
    <property type="entry name" value="ATP-DEPENDENT PROTEASE ATPASE SUBUNIT HSLU"/>
    <property type="match status" value="1"/>
</dbReference>
<dbReference type="Pfam" id="PF00004">
    <property type="entry name" value="AAA"/>
    <property type="match status" value="1"/>
</dbReference>
<dbReference type="Pfam" id="PF07724">
    <property type="entry name" value="AAA_2"/>
    <property type="match status" value="1"/>
</dbReference>
<dbReference type="SMART" id="SM00382">
    <property type="entry name" value="AAA"/>
    <property type="match status" value="1"/>
</dbReference>
<dbReference type="SMART" id="SM01086">
    <property type="entry name" value="ClpB_D2-small"/>
    <property type="match status" value="1"/>
</dbReference>
<dbReference type="SUPFAM" id="SSF52540">
    <property type="entry name" value="P-loop containing nucleoside triphosphate hydrolases"/>
    <property type="match status" value="1"/>
</dbReference>
<reference key="1">
    <citation type="journal article" date="2005" name="PLoS Biol.">
        <title>The genome sequence of Rickettsia felis identifies the first putative conjugative plasmid in an obligate intracellular parasite.</title>
        <authorList>
            <person name="Ogata H."/>
            <person name="Renesto P."/>
            <person name="Audic S."/>
            <person name="Robert C."/>
            <person name="Blanc G."/>
            <person name="Fournier P.-E."/>
            <person name="Parinello H."/>
            <person name="Claverie J.-M."/>
            <person name="Raoult D."/>
        </authorList>
    </citation>
    <scope>NUCLEOTIDE SEQUENCE [LARGE SCALE GENOMIC DNA]</scope>
    <source>
        <strain>ATCC VR-1525 / URRWXCal2</strain>
    </source>
</reference>
<feature type="chain" id="PRO_0000277981" description="ATP-dependent protease ATPase subunit HslU">
    <location>
        <begin position="1"/>
        <end position="450"/>
    </location>
</feature>
<feature type="binding site" evidence="1">
    <location>
        <position position="29"/>
    </location>
    <ligand>
        <name>ATP</name>
        <dbReference type="ChEBI" id="CHEBI:30616"/>
    </ligand>
</feature>
<feature type="binding site" evidence="1">
    <location>
        <begin position="71"/>
        <end position="76"/>
    </location>
    <ligand>
        <name>ATP</name>
        <dbReference type="ChEBI" id="CHEBI:30616"/>
    </ligand>
</feature>
<feature type="binding site" evidence="1">
    <location>
        <position position="261"/>
    </location>
    <ligand>
        <name>ATP</name>
        <dbReference type="ChEBI" id="CHEBI:30616"/>
    </ligand>
</feature>
<feature type="binding site" evidence="1">
    <location>
        <position position="328"/>
    </location>
    <ligand>
        <name>ATP</name>
        <dbReference type="ChEBI" id="CHEBI:30616"/>
    </ligand>
</feature>
<feature type="binding site" evidence="1">
    <location>
        <position position="400"/>
    </location>
    <ligand>
        <name>ATP</name>
        <dbReference type="ChEBI" id="CHEBI:30616"/>
    </ligand>
</feature>
<protein>
    <recommendedName>
        <fullName evidence="1">ATP-dependent protease ATPase subunit HslU</fullName>
    </recommendedName>
    <alternativeName>
        <fullName evidence="1">Unfoldase HslU</fullName>
    </alternativeName>
</protein>
<organism>
    <name type="scientific">Rickettsia felis (strain ATCC VR-1525 / URRWXCal2)</name>
    <name type="common">Rickettsia azadi</name>
    <dbReference type="NCBI Taxonomy" id="315456"/>
    <lineage>
        <taxon>Bacteria</taxon>
        <taxon>Pseudomonadati</taxon>
        <taxon>Pseudomonadota</taxon>
        <taxon>Alphaproteobacteria</taxon>
        <taxon>Rickettsiales</taxon>
        <taxon>Rickettsiaceae</taxon>
        <taxon>Rickettsieae</taxon>
        <taxon>Rickettsia</taxon>
        <taxon>spotted fever group</taxon>
    </lineage>
</organism>
<comment type="function">
    <text evidence="1">ATPase subunit of a proteasome-like degradation complex; this subunit has chaperone activity. The binding of ATP and its subsequent hydrolysis by HslU are essential for unfolding of protein substrates subsequently hydrolyzed by HslV. HslU recognizes the N-terminal part of its protein substrates and unfolds these before they are guided to HslV for hydrolysis.</text>
</comment>
<comment type="subunit">
    <text evidence="1">A double ring-shaped homohexamer of HslV is capped on each side by a ring-shaped HslU homohexamer. The assembly of the HslU/HslV complex is dependent on binding of ATP.</text>
</comment>
<comment type="subcellular location">
    <subcellularLocation>
        <location evidence="1">Cytoplasm</location>
    </subcellularLocation>
</comment>
<comment type="similarity">
    <text evidence="1">Belongs to the ClpX chaperone family. HslU subfamily.</text>
</comment>